<sequence>MTALDWRSALTADEQRSVRALVTATTAVDGVAPVGEQVLRELGQQRTEHLLVAGSRPGGPIIGYLNLSPPRGAGGAMAELVVHPQSRRRGIGTAMARAALAKTAGRNQFWAHGTLDPARATASALGLVGVRELIQMRRPLRDIPEPTIPDGVVIRTYAGTSDDAELLRVNNAAFAGHPEQGGWTAVQLAERRGEAWFDPDGLILAFGDSPRERPGRLLGFHWTKVHPDHPGLGEVYVLGVDPAAQRRGLGQMLTSIGIVSLARRLGGRKTLDPAVEPAVLLYVESDNVAAVRTYQSLGFTTYSVDTAYALAGTDN</sequence>
<comment type="function">
    <text evidence="1">Catalyzes the transfer of acetyl from acetyl-CoA to desacetylmycothiol (Cys-GlcN-Ins) to form mycothiol.</text>
</comment>
<comment type="catalytic activity">
    <reaction evidence="1">
        <text>1D-myo-inositol 2-(L-cysteinylamino)-2-deoxy-alpha-D-glucopyranoside + acetyl-CoA = mycothiol + CoA + H(+)</text>
        <dbReference type="Rhea" id="RHEA:26172"/>
        <dbReference type="ChEBI" id="CHEBI:15378"/>
        <dbReference type="ChEBI" id="CHEBI:16768"/>
        <dbReference type="ChEBI" id="CHEBI:57287"/>
        <dbReference type="ChEBI" id="CHEBI:57288"/>
        <dbReference type="ChEBI" id="CHEBI:58887"/>
        <dbReference type="EC" id="2.3.1.189"/>
    </reaction>
</comment>
<comment type="subunit">
    <text evidence="1">Monomer.</text>
</comment>
<comment type="similarity">
    <text evidence="1">Belongs to the acetyltransferase family. MshD subfamily.</text>
</comment>
<reference key="1">
    <citation type="journal article" date="2009" name="Vaccine">
        <title>Whole genome sequence analysis of Mycobacterium bovis bacillus Calmette-Guerin (BCG) Tokyo 172: a comparative study of BCG vaccine substrains.</title>
        <authorList>
            <person name="Seki M."/>
            <person name="Honda I."/>
            <person name="Fujita I."/>
            <person name="Yano I."/>
            <person name="Yamamoto S."/>
            <person name="Koyama A."/>
        </authorList>
    </citation>
    <scope>NUCLEOTIDE SEQUENCE [LARGE SCALE GENOMIC DNA]</scope>
    <source>
        <strain>BCG / Tokyo 172 / ATCC 35737 / TMC 1019</strain>
    </source>
</reference>
<organism>
    <name type="scientific">Mycobacterium bovis (strain BCG / Tokyo 172 / ATCC 35737 / TMC 1019)</name>
    <dbReference type="NCBI Taxonomy" id="561275"/>
    <lineage>
        <taxon>Bacteria</taxon>
        <taxon>Bacillati</taxon>
        <taxon>Actinomycetota</taxon>
        <taxon>Actinomycetes</taxon>
        <taxon>Mycobacteriales</taxon>
        <taxon>Mycobacteriaceae</taxon>
        <taxon>Mycobacterium</taxon>
        <taxon>Mycobacterium tuberculosis complex</taxon>
    </lineage>
</organism>
<accession>C1ALF4</accession>
<evidence type="ECO:0000255" key="1">
    <source>
        <dbReference type="HAMAP-Rule" id="MF_01698"/>
    </source>
</evidence>
<name>MSHD_MYCBT</name>
<protein>
    <recommendedName>
        <fullName evidence="1">Mycothiol acetyltransferase</fullName>
        <shortName evidence="1">MSH acetyltransferase</shortName>
        <ecNumber evidence="1">2.3.1.189</ecNumber>
    </recommendedName>
    <alternativeName>
        <fullName evidence="1">Mycothiol synthase</fullName>
    </alternativeName>
</protein>
<dbReference type="EC" id="2.3.1.189" evidence="1"/>
<dbReference type="EMBL" id="AP010918">
    <property type="protein sequence ID" value="BAH25133.1"/>
    <property type="molecule type" value="Genomic_DNA"/>
</dbReference>
<dbReference type="RefSeq" id="WP_003404307.1">
    <property type="nucleotide sequence ID" value="NZ_CP014566.1"/>
</dbReference>
<dbReference type="SMR" id="C1ALF4"/>
<dbReference type="KEGG" id="mbt:JTY_0841"/>
<dbReference type="HOGENOM" id="CLU_068014_0_0_11"/>
<dbReference type="GO" id="GO:0035447">
    <property type="term" value="F:mycothiol synthase activity"/>
    <property type="evidence" value="ECO:0007669"/>
    <property type="project" value="UniProtKB-UniRule"/>
</dbReference>
<dbReference type="GO" id="GO:0008999">
    <property type="term" value="F:protein-N-terminal-alanine acetyltransferase activity"/>
    <property type="evidence" value="ECO:0007669"/>
    <property type="project" value="TreeGrafter"/>
</dbReference>
<dbReference type="GO" id="GO:0010125">
    <property type="term" value="P:mycothiol biosynthetic process"/>
    <property type="evidence" value="ECO:0007669"/>
    <property type="project" value="UniProtKB-UniRule"/>
</dbReference>
<dbReference type="CDD" id="cd04301">
    <property type="entry name" value="NAT_SF"/>
    <property type="match status" value="2"/>
</dbReference>
<dbReference type="FunFam" id="3.40.630.30:FF:000089">
    <property type="entry name" value="Mycothiol acetyltransferase"/>
    <property type="match status" value="1"/>
</dbReference>
<dbReference type="Gene3D" id="3.40.630.30">
    <property type="match status" value="1"/>
</dbReference>
<dbReference type="HAMAP" id="MF_01698">
    <property type="entry name" value="MshD"/>
    <property type="match status" value="1"/>
</dbReference>
<dbReference type="InterPro" id="IPR016181">
    <property type="entry name" value="Acyl_CoA_acyltransferase"/>
</dbReference>
<dbReference type="InterPro" id="IPR000182">
    <property type="entry name" value="GNAT_dom"/>
</dbReference>
<dbReference type="InterPro" id="IPR050276">
    <property type="entry name" value="MshD_Acetyltransferase"/>
</dbReference>
<dbReference type="InterPro" id="IPR017813">
    <property type="entry name" value="Mycothiol_AcTrfase"/>
</dbReference>
<dbReference type="NCBIfam" id="TIGR03448">
    <property type="entry name" value="mycothiol_MshD"/>
    <property type="match status" value="1"/>
</dbReference>
<dbReference type="PANTHER" id="PTHR43617">
    <property type="entry name" value="L-AMINO ACID N-ACETYLTRANSFERASE"/>
    <property type="match status" value="1"/>
</dbReference>
<dbReference type="PANTHER" id="PTHR43617:SF31">
    <property type="entry name" value="MYCOTHIOL ACETYLTRANSFERASE"/>
    <property type="match status" value="1"/>
</dbReference>
<dbReference type="Pfam" id="PF00583">
    <property type="entry name" value="Acetyltransf_1"/>
    <property type="match status" value="2"/>
</dbReference>
<dbReference type="PIRSF" id="PIRSF021524">
    <property type="entry name" value="MSH_acetyltransferase"/>
    <property type="match status" value="1"/>
</dbReference>
<dbReference type="SUPFAM" id="SSF55729">
    <property type="entry name" value="Acyl-CoA N-acyltransferases (Nat)"/>
    <property type="match status" value="1"/>
</dbReference>
<dbReference type="PROSITE" id="PS51186">
    <property type="entry name" value="GNAT"/>
    <property type="match status" value="2"/>
</dbReference>
<gene>
    <name evidence="1" type="primary">mshD</name>
    <name type="ordered locus">JTY_0841</name>
</gene>
<proteinExistence type="inferred from homology"/>
<keyword id="KW-0012">Acyltransferase</keyword>
<keyword id="KW-0677">Repeat</keyword>
<keyword id="KW-0808">Transferase</keyword>
<feature type="chain" id="PRO_0000400270" description="Mycothiol acetyltransferase">
    <location>
        <begin position="1"/>
        <end position="315"/>
    </location>
</feature>
<feature type="domain" description="N-acetyltransferase 1" evidence="1">
    <location>
        <begin position="4"/>
        <end position="141"/>
    </location>
</feature>
<feature type="domain" description="N-acetyltransferase 2" evidence="1">
    <location>
        <begin position="152"/>
        <end position="315"/>
    </location>
</feature>
<feature type="binding site" evidence="1">
    <location>
        <position position="36"/>
    </location>
    <ligand>
        <name>1D-myo-inositol 2-(L-cysteinylamino)-2-deoxy-alpha-D-glucopyranoside</name>
        <dbReference type="ChEBI" id="CHEBI:58887"/>
    </ligand>
</feature>
<feature type="binding site" evidence="1">
    <location>
        <begin position="80"/>
        <end position="82"/>
    </location>
    <ligand>
        <name>acetyl-CoA</name>
        <dbReference type="ChEBI" id="CHEBI:57288"/>
        <label>1</label>
    </ligand>
</feature>
<feature type="binding site" evidence="1">
    <location>
        <begin position="88"/>
        <end position="93"/>
    </location>
    <ligand>
        <name>acetyl-CoA</name>
        <dbReference type="ChEBI" id="CHEBI:57288"/>
        <label>1</label>
    </ligand>
</feature>
<feature type="binding site" evidence="1">
    <location>
        <position position="179"/>
    </location>
    <ligand>
        <name>1D-myo-inositol 2-(L-cysteinylamino)-2-deoxy-alpha-D-glucopyranoside</name>
        <dbReference type="ChEBI" id="CHEBI:58887"/>
    </ligand>
</feature>
<feature type="binding site" evidence="1">
    <location>
        <position position="224"/>
    </location>
    <ligand>
        <name>1D-myo-inositol 2-(L-cysteinylamino)-2-deoxy-alpha-D-glucopyranoside</name>
        <dbReference type="ChEBI" id="CHEBI:58887"/>
    </ligand>
</feature>
<feature type="binding site" evidence="1">
    <location>
        <position position="234"/>
    </location>
    <ligand>
        <name>1D-myo-inositol 2-(L-cysteinylamino)-2-deoxy-alpha-D-glucopyranoside</name>
        <dbReference type="ChEBI" id="CHEBI:58887"/>
    </ligand>
</feature>
<feature type="binding site" evidence="1">
    <location>
        <begin position="238"/>
        <end position="240"/>
    </location>
    <ligand>
        <name>acetyl-CoA</name>
        <dbReference type="ChEBI" id="CHEBI:57288"/>
        <label>2</label>
    </ligand>
</feature>
<feature type="binding site" evidence="1">
    <location>
        <begin position="245"/>
        <end position="251"/>
    </location>
    <ligand>
        <name>acetyl-CoA</name>
        <dbReference type="ChEBI" id="CHEBI:57288"/>
        <label>2</label>
    </ligand>
</feature>
<feature type="binding site" evidence="1">
    <location>
        <position position="282"/>
    </location>
    <ligand>
        <name>1D-myo-inositol 2-(L-cysteinylamino)-2-deoxy-alpha-D-glucopyranoside</name>
        <dbReference type="ChEBI" id="CHEBI:58887"/>
    </ligand>
</feature>
<feature type="binding site" evidence="1">
    <location>
        <begin position="287"/>
        <end position="292"/>
    </location>
    <ligand>
        <name>acetyl-CoA</name>
        <dbReference type="ChEBI" id="CHEBI:57288"/>
        <label>2</label>
    </ligand>
</feature>